<sequence length="340" mass="37404">MLILGIETSCDDTGAAIYDLEKGLIIHKVISQNNIHSKYGGVVPEKSSKYHLKNIQPLVENIFKNSNISLSKIDGIAYTAGPGLVGSLIIGATFACSLAYTLQIPSIAINHLEGHLLTPMIKYKRPKFPFLGLIISGAHTQFVLAEDIGKYKIIGDCLDDALGEAFDKVAKLLGIKYPGGKKLSIIAKQGNSKRFFFPRPMTKKPGINFSFSGLKTYAKNLVSSFSKIDNQTKCDIARAFEDSIIDTVIIKCKRALDITNSKILLISGGVSANEPLRKNLRNLMKSRNGKLFFSKKSLCTDNAAMIAYVGSIRFKKNKTKDLSVLINPKWSLEDISRLEN</sequence>
<comment type="function">
    <text evidence="1">Required for the formation of a threonylcarbamoyl group on adenosine at position 37 (t(6)A37) in tRNAs that read codons beginning with adenine. Is involved in the transfer of the threonylcarbamoyl moiety of threonylcarbamoyl-AMP (TC-AMP) to the N6 group of A37, together with TsaE and TsaB. TsaD likely plays a direct catalytic role in this reaction.</text>
</comment>
<comment type="catalytic activity">
    <reaction evidence="1">
        <text>L-threonylcarbamoyladenylate + adenosine(37) in tRNA = N(6)-L-threonylcarbamoyladenosine(37) in tRNA + AMP + H(+)</text>
        <dbReference type="Rhea" id="RHEA:37059"/>
        <dbReference type="Rhea" id="RHEA-COMP:10162"/>
        <dbReference type="Rhea" id="RHEA-COMP:10163"/>
        <dbReference type="ChEBI" id="CHEBI:15378"/>
        <dbReference type="ChEBI" id="CHEBI:73682"/>
        <dbReference type="ChEBI" id="CHEBI:74411"/>
        <dbReference type="ChEBI" id="CHEBI:74418"/>
        <dbReference type="ChEBI" id="CHEBI:456215"/>
        <dbReference type="EC" id="2.3.1.234"/>
    </reaction>
</comment>
<comment type="cofactor">
    <cofactor evidence="1">
        <name>Fe(2+)</name>
        <dbReference type="ChEBI" id="CHEBI:29033"/>
    </cofactor>
    <text evidence="1">Binds 1 Fe(2+) ion per subunit.</text>
</comment>
<comment type="subcellular location">
    <subcellularLocation>
        <location evidence="1">Cytoplasm</location>
    </subcellularLocation>
</comment>
<comment type="similarity">
    <text evidence="1">Belongs to the KAE1 / TsaD family.</text>
</comment>
<organism>
    <name type="scientific">Wigglesworthia glossinidia brevipalpis</name>
    <dbReference type="NCBI Taxonomy" id="36870"/>
    <lineage>
        <taxon>Bacteria</taxon>
        <taxon>Pseudomonadati</taxon>
        <taxon>Pseudomonadota</taxon>
        <taxon>Gammaproteobacteria</taxon>
        <taxon>Enterobacterales</taxon>
        <taxon>Erwiniaceae</taxon>
        <taxon>Wigglesworthia</taxon>
    </lineage>
</organism>
<accession>Q8D283</accession>
<keyword id="KW-0012">Acyltransferase</keyword>
<keyword id="KW-0963">Cytoplasm</keyword>
<keyword id="KW-0408">Iron</keyword>
<keyword id="KW-0479">Metal-binding</keyword>
<keyword id="KW-1185">Reference proteome</keyword>
<keyword id="KW-0808">Transferase</keyword>
<keyword id="KW-0819">tRNA processing</keyword>
<dbReference type="EC" id="2.3.1.234" evidence="1"/>
<dbReference type="EMBL" id="BA000021">
    <property type="protein sequence ID" value="BAC24617.1"/>
    <property type="molecule type" value="Genomic_DNA"/>
</dbReference>
<dbReference type="SMR" id="Q8D283"/>
<dbReference type="STRING" id="36870.gene:10368975"/>
<dbReference type="KEGG" id="wbr:ygjD"/>
<dbReference type="eggNOG" id="COG0533">
    <property type="taxonomic scope" value="Bacteria"/>
</dbReference>
<dbReference type="HOGENOM" id="CLU_023208_0_0_6"/>
<dbReference type="OrthoDB" id="9806197at2"/>
<dbReference type="Proteomes" id="UP000000562">
    <property type="component" value="Chromosome"/>
</dbReference>
<dbReference type="GO" id="GO:0005737">
    <property type="term" value="C:cytoplasm"/>
    <property type="evidence" value="ECO:0007669"/>
    <property type="project" value="UniProtKB-SubCell"/>
</dbReference>
<dbReference type="GO" id="GO:0005506">
    <property type="term" value="F:iron ion binding"/>
    <property type="evidence" value="ECO:0007669"/>
    <property type="project" value="UniProtKB-UniRule"/>
</dbReference>
<dbReference type="GO" id="GO:0061711">
    <property type="term" value="F:N(6)-L-threonylcarbamoyladenine synthase activity"/>
    <property type="evidence" value="ECO:0007669"/>
    <property type="project" value="UniProtKB-EC"/>
</dbReference>
<dbReference type="GO" id="GO:0002949">
    <property type="term" value="P:tRNA threonylcarbamoyladenosine modification"/>
    <property type="evidence" value="ECO:0007669"/>
    <property type="project" value="UniProtKB-UniRule"/>
</dbReference>
<dbReference type="CDD" id="cd24133">
    <property type="entry name" value="ASKHA_NBD_TsaD_bac"/>
    <property type="match status" value="1"/>
</dbReference>
<dbReference type="FunFam" id="3.30.420.40:FF:000012">
    <property type="entry name" value="tRNA N6-adenosine threonylcarbamoyltransferase"/>
    <property type="match status" value="1"/>
</dbReference>
<dbReference type="Gene3D" id="3.30.420.40">
    <property type="match status" value="2"/>
</dbReference>
<dbReference type="HAMAP" id="MF_01445">
    <property type="entry name" value="TsaD"/>
    <property type="match status" value="1"/>
</dbReference>
<dbReference type="InterPro" id="IPR043129">
    <property type="entry name" value="ATPase_NBD"/>
</dbReference>
<dbReference type="InterPro" id="IPR000905">
    <property type="entry name" value="Gcp-like_dom"/>
</dbReference>
<dbReference type="InterPro" id="IPR017861">
    <property type="entry name" value="KAE1/TsaD"/>
</dbReference>
<dbReference type="InterPro" id="IPR017860">
    <property type="entry name" value="Peptidase_M22_CS"/>
</dbReference>
<dbReference type="InterPro" id="IPR022450">
    <property type="entry name" value="TsaD"/>
</dbReference>
<dbReference type="NCBIfam" id="TIGR00329">
    <property type="entry name" value="gcp_kae1"/>
    <property type="match status" value="1"/>
</dbReference>
<dbReference type="NCBIfam" id="TIGR03723">
    <property type="entry name" value="T6A_TsaD_YgjD"/>
    <property type="match status" value="1"/>
</dbReference>
<dbReference type="PANTHER" id="PTHR11735">
    <property type="entry name" value="TRNA N6-ADENOSINE THREONYLCARBAMOYLTRANSFERASE"/>
    <property type="match status" value="1"/>
</dbReference>
<dbReference type="PANTHER" id="PTHR11735:SF6">
    <property type="entry name" value="TRNA N6-ADENOSINE THREONYLCARBAMOYLTRANSFERASE, MITOCHONDRIAL"/>
    <property type="match status" value="1"/>
</dbReference>
<dbReference type="Pfam" id="PF00814">
    <property type="entry name" value="TsaD"/>
    <property type="match status" value="1"/>
</dbReference>
<dbReference type="PRINTS" id="PR00789">
    <property type="entry name" value="OSIALOPTASE"/>
</dbReference>
<dbReference type="SUPFAM" id="SSF53067">
    <property type="entry name" value="Actin-like ATPase domain"/>
    <property type="match status" value="2"/>
</dbReference>
<dbReference type="PROSITE" id="PS01016">
    <property type="entry name" value="GLYCOPROTEASE"/>
    <property type="match status" value="1"/>
</dbReference>
<reference key="1">
    <citation type="journal article" date="2002" name="Nat. Genet.">
        <title>Genome sequence of the endocellular obligate symbiont of tsetse flies, Wigglesworthia glossinidia.</title>
        <authorList>
            <person name="Akman L."/>
            <person name="Yamashita A."/>
            <person name="Watanabe H."/>
            <person name="Oshima K."/>
            <person name="Shiba T."/>
            <person name="Hattori M."/>
            <person name="Aksoy S."/>
        </authorList>
    </citation>
    <scope>NUCLEOTIDE SEQUENCE [LARGE SCALE GENOMIC DNA]</scope>
</reference>
<feature type="chain" id="PRO_0000303611" description="tRNA N6-adenosine threonylcarbamoyltransferase">
    <location>
        <begin position="1"/>
        <end position="340"/>
    </location>
</feature>
<feature type="binding site" evidence="1">
    <location>
        <position position="111"/>
    </location>
    <ligand>
        <name>Fe cation</name>
        <dbReference type="ChEBI" id="CHEBI:24875"/>
    </ligand>
</feature>
<feature type="binding site" evidence="1">
    <location>
        <position position="115"/>
    </location>
    <ligand>
        <name>Fe cation</name>
        <dbReference type="ChEBI" id="CHEBI:24875"/>
    </ligand>
</feature>
<feature type="binding site" evidence="1">
    <location>
        <begin position="134"/>
        <end position="138"/>
    </location>
    <ligand>
        <name>substrate</name>
    </ligand>
</feature>
<feature type="binding site" evidence="1">
    <location>
        <position position="167"/>
    </location>
    <ligand>
        <name>substrate</name>
    </ligand>
</feature>
<feature type="binding site" evidence="1">
    <location>
        <position position="180"/>
    </location>
    <ligand>
        <name>substrate</name>
    </ligand>
</feature>
<feature type="binding site" evidence="1">
    <location>
        <position position="273"/>
    </location>
    <ligand>
        <name>substrate</name>
    </ligand>
</feature>
<feature type="binding site" evidence="1">
    <location>
        <position position="301"/>
    </location>
    <ligand>
        <name>Fe cation</name>
        <dbReference type="ChEBI" id="CHEBI:24875"/>
    </ligand>
</feature>
<evidence type="ECO:0000255" key="1">
    <source>
        <dbReference type="HAMAP-Rule" id="MF_01445"/>
    </source>
</evidence>
<protein>
    <recommendedName>
        <fullName evidence="1">tRNA N6-adenosine threonylcarbamoyltransferase</fullName>
        <ecNumber evidence="1">2.3.1.234</ecNumber>
    </recommendedName>
    <alternativeName>
        <fullName evidence="1">N6-L-threonylcarbamoyladenine synthase</fullName>
        <shortName evidence="1">t(6)A synthase</shortName>
    </alternativeName>
    <alternativeName>
        <fullName evidence="1">t(6)A37 threonylcarbamoyladenosine biosynthesis protein TsaD</fullName>
    </alternativeName>
    <alternativeName>
        <fullName evidence="1">tRNA threonylcarbamoyladenosine biosynthesis protein TsaD</fullName>
    </alternativeName>
</protein>
<proteinExistence type="inferred from homology"/>
<gene>
    <name evidence="1" type="primary">tsaD</name>
    <name type="synonym">gcp</name>
    <name type="ordered locus">WIGBR4710</name>
</gene>
<name>TSAD_WIGBR</name>